<reference key="1">
    <citation type="journal article" date="2007" name="Environ. Microbiol.">
        <title>Whole-genome analysis of the ammonia-oxidizing bacterium, Nitrosomonas eutropha C91: implications for niche adaptation.</title>
        <authorList>
            <person name="Stein L.Y."/>
            <person name="Arp D.J."/>
            <person name="Berube P.M."/>
            <person name="Chain P.S."/>
            <person name="Hauser L."/>
            <person name="Jetten M.S."/>
            <person name="Klotz M.G."/>
            <person name="Larimer F.W."/>
            <person name="Norton J.M."/>
            <person name="Op den Camp H.J.M."/>
            <person name="Shin M."/>
            <person name="Wei X."/>
        </authorList>
    </citation>
    <scope>NUCLEOTIDE SEQUENCE [LARGE SCALE GENOMIC DNA]</scope>
    <source>
        <strain>DSM 101675 / C91 / Nm57</strain>
    </source>
</reference>
<evidence type="ECO:0000255" key="1">
    <source>
        <dbReference type="HAMAP-Rule" id="MF_00302"/>
    </source>
</evidence>
<proteinExistence type="inferred from homology"/>
<sequence length="103" mass="11757">MAANNRNPESVIEKGKTRLTPPPLYKVILINDDFTPMDFVVKVLRHFFFMDEEMATRIMLKIHTEGAGICGTYPGDIAATKVQQVNEFSKQNQHPLMCVMEKE</sequence>
<protein>
    <recommendedName>
        <fullName evidence="1">ATP-dependent Clp protease adapter protein ClpS</fullName>
    </recommendedName>
</protein>
<gene>
    <name evidence="1" type="primary">clpS</name>
    <name type="ordered locus">Neut_2047</name>
</gene>
<organism>
    <name type="scientific">Nitrosomonas eutropha (strain DSM 101675 / C91 / Nm57)</name>
    <dbReference type="NCBI Taxonomy" id="335283"/>
    <lineage>
        <taxon>Bacteria</taxon>
        <taxon>Pseudomonadati</taxon>
        <taxon>Pseudomonadota</taxon>
        <taxon>Betaproteobacteria</taxon>
        <taxon>Nitrosomonadales</taxon>
        <taxon>Nitrosomonadaceae</taxon>
        <taxon>Nitrosomonas</taxon>
    </lineage>
</organism>
<accession>Q0AEG2</accession>
<feature type="chain" id="PRO_1000022613" description="ATP-dependent Clp protease adapter protein ClpS">
    <location>
        <begin position="1"/>
        <end position="103"/>
    </location>
</feature>
<comment type="function">
    <text evidence="1">Involved in the modulation of the specificity of the ClpAP-mediated ATP-dependent protein degradation.</text>
</comment>
<comment type="subunit">
    <text evidence="1">Binds to the N-terminal domain of the chaperone ClpA.</text>
</comment>
<comment type="similarity">
    <text evidence="1">Belongs to the ClpS family.</text>
</comment>
<name>CLPS_NITEC</name>
<dbReference type="EMBL" id="CP000450">
    <property type="protein sequence ID" value="ABI60270.1"/>
    <property type="molecule type" value="Genomic_DNA"/>
</dbReference>
<dbReference type="RefSeq" id="WP_011635067.1">
    <property type="nucleotide sequence ID" value="NC_008344.1"/>
</dbReference>
<dbReference type="SMR" id="Q0AEG2"/>
<dbReference type="STRING" id="335283.Neut_2047"/>
<dbReference type="KEGG" id="net:Neut_2047"/>
<dbReference type="eggNOG" id="COG2127">
    <property type="taxonomic scope" value="Bacteria"/>
</dbReference>
<dbReference type="HOGENOM" id="CLU_134358_2_1_4"/>
<dbReference type="OrthoDB" id="9796121at2"/>
<dbReference type="Proteomes" id="UP000001966">
    <property type="component" value="Chromosome"/>
</dbReference>
<dbReference type="GO" id="GO:0030163">
    <property type="term" value="P:protein catabolic process"/>
    <property type="evidence" value="ECO:0007669"/>
    <property type="project" value="InterPro"/>
</dbReference>
<dbReference type="GO" id="GO:0006508">
    <property type="term" value="P:proteolysis"/>
    <property type="evidence" value="ECO:0007669"/>
    <property type="project" value="UniProtKB-UniRule"/>
</dbReference>
<dbReference type="FunFam" id="3.30.1390.10:FF:000002">
    <property type="entry name" value="ATP-dependent Clp protease adapter protein ClpS"/>
    <property type="match status" value="1"/>
</dbReference>
<dbReference type="Gene3D" id="3.30.1390.10">
    <property type="match status" value="1"/>
</dbReference>
<dbReference type="HAMAP" id="MF_00302">
    <property type="entry name" value="ClpS"/>
    <property type="match status" value="1"/>
</dbReference>
<dbReference type="InterPro" id="IPR022935">
    <property type="entry name" value="ClpS"/>
</dbReference>
<dbReference type="InterPro" id="IPR003769">
    <property type="entry name" value="ClpS_core"/>
</dbReference>
<dbReference type="InterPro" id="IPR014719">
    <property type="entry name" value="Ribosomal_bL12_C/ClpS-like"/>
</dbReference>
<dbReference type="NCBIfam" id="NF000672">
    <property type="entry name" value="PRK00033.1-5"/>
    <property type="match status" value="1"/>
</dbReference>
<dbReference type="PANTHER" id="PTHR33473:SF19">
    <property type="entry name" value="ATP-DEPENDENT CLP PROTEASE ADAPTER PROTEIN CLPS"/>
    <property type="match status" value="1"/>
</dbReference>
<dbReference type="PANTHER" id="PTHR33473">
    <property type="entry name" value="ATP-DEPENDENT CLP PROTEASE ADAPTER PROTEIN CLPS1, CHLOROPLASTIC"/>
    <property type="match status" value="1"/>
</dbReference>
<dbReference type="Pfam" id="PF02617">
    <property type="entry name" value="ClpS"/>
    <property type="match status" value="1"/>
</dbReference>
<dbReference type="SUPFAM" id="SSF54736">
    <property type="entry name" value="ClpS-like"/>
    <property type="match status" value="1"/>
</dbReference>